<proteinExistence type="evidence at protein level"/>
<keyword id="KW-0007">Acetylation</keyword>
<keyword id="KW-0256">Endoplasmic reticulum</keyword>
<keyword id="KW-0325">Glycoprotein</keyword>
<keyword id="KW-1017">Isopeptide bond</keyword>
<keyword id="KW-0472">Membrane</keyword>
<keyword id="KW-1185">Reference proteome</keyword>
<keyword id="KW-0732">Signal</keyword>
<keyword id="KW-0812">Transmembrane</keyword>
<keyword id="KW-1133">Transmembrane helix</keyword>
<keyword id="KW-0832">Ubl conjugation</keyword>
<comment type="function">
    <text evidence="2 8">Subunit of the oligosaccharyl transferase (OST) complex that catalyzes the initial transfer of a defined glycan (Glc(3)Man(9)GlcNAc(2) in eukaryotes) from the lipid carrier dolichol-pyrophosphate to an asparagine residue within an Asn-X-Ser/Thr consensus motif in nascent polypeptide chains, the first step in protein N-glycosylation (Probable). N-glycosylation occurs cotranslationally and the complex associates with the Sec61 complex at the channel-forming translocon complex that mediates protein translocation across the endoplasmic reticulum (ER). All subunits are required for a maximal enzyme activity (By similarity).</text>
</comment>
<comment type="pathway">
    <text evidence="3">Protein modification; protein glycosylation.</text>
</comment>
<comment type="subunit">
    <text evidence="2 4 6">Component of the oligosaccharyltransferase (OST) complex. OST exists in two different complex forms which contain common core subunits RPN1, RPN2, OST48, OST4, DAD1 and TMEM258, either STT3A or STT3B as catalytic subunits, and form-specific accessory subunits (PubMed:7737165). STT3A complex assembly occurs through the formation of 3 subcomplexes. Subcomplex 1 contains RPN1 and TMEM258, subcomplex 2 contains the STT3A-specific subunits STT3A, DC2/OSTC, and KCP2 as well as the core subunit OST4, and subcomplex 3 contains RPN2, DAD1, and OST48. The STT3A complex can form stable complexes with the Sec61 complex or with both the Sec61 and TRAP complexes (By similarity). Interacts with TMEM35A/NACHO (By similarity).</text>
</comment>
<comment type="subcellular location">
    <subcellularLocation>
        <location evidence="6">Endoplasmic reticulum membrane</location>
        <topology evidence="2">Single-pass type I membrane protein</topology>
    </subcellularLocation>
</comment>
<comment type="tissue specificity">
    <text evidence="6">Detected in liver (at protein level).</text>
</comment>
<comment type="PTM">
    <text evidence="3">Ubiquitinated by the ECS(ASB11) complex.</text>
</comment>
<comment type="PTM">
    <text evidence="3">Ufmylated by UFL1 in response to endoplasmic reticulum stress, promoting reticulophagy of endoplasmic reticulum sheets.</text>
</comment>
<comment type="similarity">
    <text evidence="7">Belongs to the OST1 family.</text>
</comment>
<organism>
    <name type="scientific">Sus scrofa</name>
    <name type="common">Pig</name>
    <dbReference type="NCBI Taxonomy" id="9823"/>
    <lineage>
        <taxon>Eukaryota</taxon>
        <taxon>Metazoa</taxon>
        <taxon>Chordata</taxon>
        <taxon>Craniata</taxon>
        <taxon>Vertebrata</taxon>
        <taxon>Euteleostomi</taxon>
        <taxon>Mammalia</taxon>
        <taxon>Eutheria</taxon>
        <taxon>Laurasiatheria</taxon>
        <taxon>Artiodactyla</taxon>
        <taxon>Suina</taxon>
        <taxon>Suidae</taxon>
        <taxon>Sus</taxon>
    </lineage>
</organism>
<feature type="signal peptide" evidence="1">
    <location>
        <begin position="1"/>
        <end position="24"/>
    </location>
</feature>
<feature type="chain" id="PRO_0000331254" description="Dolichyl-diphosphooligosaccharide--protein glycosyltransferase subunit 1">
    <location>
        <begin position="25"/>
        <end position="608"/>
    </location>
</feature>
<feature type="topological domain" description="Lumenal" evidence="5">
    <location>
        <begin position="25"/>
        <end position="435"/>
    </location>
</feature>
<feature type="transmembrane region" description="Helical" evidence="5">
    <location>
        <begin position="436"/>
        <end position="456"/>
    </location>
</feature>
<feature type="topological domain" description="Cytoplasmic" evidence="1">
    <location>
        <begin position="457"/>
        <end position="607"/>
    </location>
</feature>
<feature type="modified residue" description="N6-acetyllysine" evidence="3">
    <location>
        <position position="188"/>
    </location>
</feature>
<feature type="modified residue" description="N6-acetyllysine; alternate" evidence="4">
    <location>
        <position position="539"/>
    </location>
</feature>
<feature type="glycosylation site" description="N-linked (GlcNAc...) asparagine" evidence="5">
    <location>
        <position position="300"/>
    </location>
</feature>
<feature type="cross-link" description="Glycyl lysine isopeptide (Lys-Gly) (interchain with G-Cter in SUMO2); alternate" evidence="3">
    <location>
        <position position="539"/>
    </location>
</feature>
<gene>
    <name evidence="3" type="primary">RPN1</name>
</gene>
<accession>Q9GMB0</accession>
<protein>
    <recommendedName>
        <fullName evidence="3">Dolichyl-diphosphooligosaccharide--protein glycosyltransferase subunit 1</fullName>
    </recommendedName>
    <alternativeName>
        <fullName>Dolichyl-diphosphooligosaccharide--protein glycosyltransferase 67 kDa subunit</fullName>
    </alternativeName>
    <alternativeName>
        <fullName>Ribophorin I</fullName>
        <shortName>RPN-I</shortName>
    </alternativeName>
    <alternativeName>
        <fullName>Ribophorin-1</fullName>
    </alternativeName>
</protein>
<evidence type="ECO:0000250" key="1"/>
<evidence type="ECO:0000250" key="2">
    <source>
        <dbReference type="UniProtKB" id="E2RQ08"/>
    </source>
</evidence>
<evidence type="ECO:0000250" key="3">
    <source>
        <dbReference type="UniProtKB" id="P04843"/>
    </source>
</evidence>
<evidence type="ECO:0000250" key="4">
    <source>
        <dbReference type="UniProtKB" id="Q91YQ5"/>
    </source>
</evidence>
<evidence type="ECO:0000255" key="5"/>
<evidence type="ECO:0000269" key="6">
    <source>
    </source>
</evidence>
<evidence type="ECO:0000305" key="7"/>
<evidence type="ECO:0000305" key="8">
    <source>
    </source>
</evidence>
<dbReference type="EMBL" id="AJ293582">
    <property type="protein sequence ID" value="CAC04096.1"/>
    <property type="molecule type" value="mRNA"/>
</dbReference>
<dbReference type="RefSeq" id="NP_999498.1">
    <property type="nucleotide sequence ID" value="NM_214333.1"/>
</dbReference>
<dbReference type="SMR" id="Q9GMB0"/>
<dbReference type="FunCoup" id="Q9GMB0">
    <property type="interactions" value="2584"/>
</dbReference>
<dbReference type="STRING" id="9823.ENSSSCP00000059145"/>
<dbReference type="GlyCosmos" id="Q9GMB0">
    <property type="glycosylation" value="1 site, No reported glycans"/>
</dbReference>
<dbReference type="GlyGen" id="Q9GMB0">
    <property type="glycosylation" value="1 site"/>
</dbReference>
<dbReference type="PaxDb" id="9823-ENSSSCP00000012376"/>
<dbReference type="PeptideAtlas" id="Q9GMB0"/>
<dbReference type="GeneID" id="397606"/>
<dbReference type="KEGG" id="ssc:397606"/>
<dbReference type="CTD" id="6184"/>
<dbReference type="eggNOG" id="KOG2291">
    <property type="taxonomic scope" value="Eukaryota"/>
</dbReference>
<dbReference type="InParanoid" id="Q9GMB0"/>
<dbReference type="OrthoDB" id="310030at2759"/>
<dbReference type="UniPathway" id="UPA00378"/>
<dbReference type="Proteomes" id="UP000008227">
    <property type="component" value="Unplaced"/>
</dbReference>
<dbReference type="Proteomes" id="UP000314985">
    <property type="component" value="Unplaced"/>
</dbReference>
<dbReference type="Proteomes" id="UP000694570">
    <property type="component" value="Unplaced"/>
</dbReference>
<dbReference type="Proteomes" id="UP000694571">
    <property type="component" value="Unplaced"/>
</dbReference>
<dbReference type="Proteomes" id="UP000694720">
    <property type="component" value="Unplaced"/>
</dbReference>
<dbReference type="Proteomes" id="UP000694722">
    <property type="component" value="Unplaced"/>
</dbReference>
<dbReference type="Proteomes" id="UP000694723">
    <property type="component" value="Unplaced"/>
</dbReference>
<dbReference type="Proteomes" id="UP000694724">
    <property type="component" value="Unplaced"/>
</dbReference>
<dbReference type="Proteomes" id="UP000694725">
    <property type="component" value="Unplaced"/>
</dbReference>
<dbReference type="Proteomes" id="UP000694726">
    <property type="component" value="Unplaced"/>
</dbReference>
<dbReference type="Proteomes" id="UP000694727">
    <property type="component" value="Unplaced"/>
</dbReference>
<dbReference type="Proteomes" id="UP000694728">
    <property type="component" value="Unplaced"/>
</dbReference>
<dbReference type="GO" id="GO:0008250">
    <property type="term" value="C:oligosaccharyltransferase complex"/>
    <property type="evidence" value="ECO:0000318"/>
    <property type="project" value="GO_Central"/>
</dbReference>
<dbReference type="GO" id="GO:0018279">
    <property type="term" value="P:protein N-linked glycosylation via asparagine"/>
    <property type="evidence" value="ECO:0000318"/>
    <property type="project" value="GO_Central"/>
</dbReference>
<dbReference type="InterPro" id="IPR007676">
    <property type="entry name" value="Ribophorin_I"/>
</dbReference>
<dbReference type="PANTHER" id="PTHR21049:SF0">
    <property type="entry name" value="DOLICHYL-DIPHOSPHOOLIGOSACCHARIDE--PROTEIN GLYCOSYLTRANSFERASE SUBUNIT 1"/>
    <property type="match status" value="1"/>
</dbReference>
<dbReference type="PANTHER" id="PTHR21049">
    <property type="entry name" value="RIBOPHORIN I"/>
    <property type="match status" value="1"/>
</dbReference>
<dbReference type="Pfam" id="PF04597">
    <property type="entry name" value="Ribophorin_I"/>
    <property type="match status" value="1"/>
</dbReference>
<name>RPN1_PIG</name>
<reference key="1">
    <citation type="journal article" date="2000" name="Glycoconj. J.">
        <title>The oligosaccharyltransferase complex from pig liver: cDNA cloning, expression and functional characterisation.</title>
        <authorList>
            <person name="Hardt B."/>
            <person name="Aparicio R."/>
            <person name="Bause E."/>
        </authorList>
    </citation>
    <scope>NUCLEOTIDE SEQUENCE [MRNA]</scope>
    <scope>SUBCELLULAR LOCATION</scope>
    <source>
        <tissue>Muscle</tissue>
    </source>
</reference>
<reference key="2">
    <citation type="journal article" date="1995" name="Eur. J. Biochem.">
        <title>Oligosaccharyl transferase is a constitutive component of an oligomeric protein complex from pig liver endoplasmic reticulum.</title>
        <authorList>
            <person name="Breuer W."/>
            <person name="Bause E."/>
        </authorList>
    </citation>
    <scope>FUNCTION OF THE OLIGOSACCHARYLTRANSFERASE COMPLEX</scope>
    <scope>SUBCELLULAR LOCATION</scope>
    <scope>SUBUNIT</scope>
    <scope>TISSUE SPECIFICITY</scope>
</reference>
<sequence length="608" mass="68695">MEAPAVCLLPLLLLLWAWAPAPGRASPEALPLVNEDVKRTVDLSSHLAKVTAEVVLAHAGSSSSPRAASFLLALEPELEARLAHLGVQVKGEDEEENNLEVRETKIKGKRGRFFTVTLPVALDPGAKISVTVETVYTHVLQPYPTQITQSEKQFVVFEGNHYFYSPYPTKSQSMRVKLASRNVESYTKLGNPTRSEDLLDYGPFRDVPPYSQDTFKVHSENNSPFLTITSMTRVIEVSHWGNIAVEENVDLKHTGAVLKGPFSRYDYQRQPDSGISSIRSFKTILPAAAQDVYYRDEIGNVSTSHLLILDDSVEMEIRPRFPLFGGWKTHYIVGYNLPSYEYLYNLGDQYALKMRLVDHVFDEQVIDSLTVKIILPEGAKNIQVDSPYEISRAPDELHYTYLDTFGRPVIVAHKKNLVEQHIQDIVVHYTFNKVLMLQEPLLVVAAFYILFFTVIVYVRLDFSITKDPAAEARMKVACITEQVLTLVNKRIGLYRHFDETINRYKQSRDVSTLNSGKKSLELEHKALTSEVALLQSRLKTEGSDLCDKVSEMQKLDAQVKELVLKSAVEAERLVAGKLKKDTYIENEKLISGKRQELVTKIDHILDAL</sequence>